<name>MTNB_DROWI</name>
<gene>
    <name type="ORF">GK25216</name>
</gene>
<reference key="1">
    <citation type="journal article" date="2007" name="Nature">
        <title>Evolution of genes and genomes on the Drosophila phylogeny.</title>
        <authorList>
            <consortium name="Drosophila 12 genomes consortium"/>
        </authorList>
    </citation>
    <scope>NUCLEOTIDE SEQUENCE [LARGE SCALE GENOMIC DNA]</scope>
    <source>
        <strain>Tucson 14030-0811.24</strain>
    </source>
</reference>
<feature type="chain" id="PRO_0000393790" description="Probable methylthioribulose-1-phosphate dehydratase">
    <location>
        <begin position="1"/>
        <end position="228"/>
    </location>
</feature>
<feature type="active site" description="Proton donor/acceptor" evidence="1">
    <location>
        <position position="129"/>
    </location>
</feature>
<feature type="binding site" evidence="1">
    <location>
        <position position="87"/>
    </location>
    <ligand>
        <name>substrate</name>
    </ligand>
</feature>
<feature type="binding site" evidence="1">
    <location>
        <position position="105"/>
    </location>
    <ligand>
        <name>Zn(2+)</name>
        <dbReference type="ChEBI" id="CHEBI:29105"/>
    </ligand>
</feature>
<feature type="binding site" evidence="1">
    <location>
        <position position="107"/>
    </location>
    <ligand>
        <name>Zn(2+)</name>
        <dbReference type="ChEBI" id="CHEBI:29105"/>
    </ligand>
</feature>
<feature type="binding site" evidence="1">
    <location>
        <position position="185"/>
    </location>
    <ligand>
        <name>Zn(2+)</name>
        <dbReference type="ChEBI" id="CHEBI:29105"/>
    </ligand>
</feature>
<keyword id="KW-0028">Amino-acid biosynthesis</keyword>
<keyword id="KW-0963">Cytoplasm</keyword>
<keyword id="KW-0456">Lyase</keyword>
<keyword id="KW-0479">Metal-binding</keyword>
<keyword id="KW-0486">Methionine biosynthesis</keyword>
<keyword id="KW-1185">Reference proteome</keyword>
<keyword id="KW-0862">Zinc</keyword>
<evidence type="ECO:0000255" key="1">
    <source>
        <dbReference type="HAMAP-Rule" id="MF_03116"/>
    </source>
</evidence>
<comment type="function">
    <text evidence="1">Catalyzes the dehydration of methylthioribulose-1-phosphate (MTRu-1-P) into 2,3-diketo-5-methylthiopentyl-1-phosphate (DK-MTP-1-P).</text>
</comment>
<comment type="catalytic activity">
    <reaction evidence="1">
        <text>5-(methylsulfanyl)-D-ribulose 1-phosphate = 5-methylsulfanyl-2,3-dioxopentyl phosphate + H2O</text>
        <dbReference type="Rhea" id="RHEA:15549"/>
        <dbReference type="ChEBI" id="CHEBI:15377"/>
        <dbReference type="ChEBI" id="CHEBI:58548"/>
        <dbReference type="ChEBI" id="CHEBI:58828"/>
        <dbReference type="EC" id="4.2.1.109"/>
    </reaction>
</comment>
<comment type="cofactor">
    <cofactor evidence="1">
        <name>Zn(2+)</name>
        <dbReference type="ChEBI" id="CHEBI:29105"/>
    </cofactor>
    <text evidence="1">Binds 1 zinc ion per subunit.</text>
</comment>
<comment type="pathway">
    <text evidence="1">Amino-acid biosynthesis; L-methionine biosynthesis via salvage pathway; L-methionine from S-methyl-5-thio-alpha-D-ribose 1-phosphate: step 2/6.</text>
</comment>
<comment type="subcellular location">
    <subcellularLocation>
        <location evidence="1">Cytoplasm</location>
    </subcellularLocation>
</comment>
<comment type="similarity">
    <text evidence="1">Belongs to the aldolase class II family. MtnB subfamily.</text>
</comment>
<accession>B4NEU3</accession>
<organism>
    <name type="scientific">Drosophila willistoni</name>
    <name type="common">Fruit fly</name>
    <dbReference type="NCBI Taxonomy" id="7260"/>
    <lineage>
        <taxon>Eukaryota</taxon>
        <taxon>Metazoa</taxon>
        <taxon>Ecdysozoa</taxon>
        <taxon>Arthropoda</taxon>
        <taxon>Hexapoda</taxon>
        <taxon>Insecta</taxon>
        <taxon>Pterygota</taxon>
        <taxon>Neoptera</taxon>
        <taxon>Endopterygota</taxon>
        <taxon>Diptera</taxon>
        <taxon>Brachycera</taxon>
        <taxon>Muscomorpha</taxon>
        <taxon>Ephydroidea</taxon>
        <taxon>Drosophilidae</taxon>
        <taxon>Drosophila</taxon>
        <taxon>Sophophora</taxon>
    </lineage>
</organism>
<sequence>MSLSIFKDLPDEHPRHLIPSLCRQFYHMGWVTGTGGGMSIKLNNEIYIAPSGVQKERMQPEDLFVQDISGKDLQLPPEIKGLTKSQCTPLFMLAYRHRKAGAVIHTHSQHAVMATLLWPGKTFQCTHLEMIKGVYDEADKRYLRYDEKLVVPIIENTPFERDLADSMYAAMMEYPGCSAILVRRHGVYVWGQTWEKAKAMSECYDYLFQLAVEMKKNGLDPEKFEPNC</sequence>
<dbReference type="EC" id="4.2.1.109" evidence="1"/>
<dbReference type="EMBL" id="CH964239">
    <property type="protein sequence ID" value="EDW82262.1"/>
    <property type="molecule type" value="Genomic_DNA"/>
</dbReference>
<dbReference type="SMR" id="B4NEU3"/>
<dbReference type="STRING" id="7260.B4NEU3"/>
<dbReference type="EnsemblMetazoa" id="FBtr0255867">
    <property type="protein sequence ID" value="FBpp0254359"/>
    <property type="gene ID" value="FBgn0227175"/>
</dbReference>
<dbReference type="EnsemblMetazoa" id="XM_002071240.4">
    <property type="protein sequence ID" value="XP_002071276.1"/>
    <property type="gene ID" value="LOC6649120"/>
</dbReference>
<dbReference type="GeneID" id="6649120"/>
<dbReference type="KEGG" id="dwi:6649120"/>
<dbReference type="eggNOG" id="KOG2631">
    <property type="taxonomic scope" value="Eukaryota"/>
</dbReference>
<dbReference type="HOGENOM" id="CLU_006033_4_0_1"/>
<dbReference type="OMA" id="WFPGTSG"/>
<dbReference type="OrthoDB" id="191080at2759"/>
<dbReference type="PhylomeDB" id="B4NEU3"/>
<dbReference type="UniPathway" id="UPA00904">
    <property type="reaction ID" value="UER00875"/>
</dbReference>
<dbReference type="Proteomes" id="UP000007798">
    <property type="component" value="Unassembled WGS sequence"/>
</dbReference>
<dbReference type="GO" id="GO:0005737">
    <property type="term" value="C:cytoplasm"/>
    <property type="evidence" value="ECO:0007669"/>
    <property type="project" value="UniProtKB-SubCell"/>
</dbReference>
<dbReference type="GO" id="GO:0046570">
    <property type="term" value="F:methylthioribulose 1-phosphate dehydratase activity"/>
    <property type="evidence" value="ECO:0000250"/>
    <property type="project" value="UniProtKB"/>
</dbReference>
<dbReference type="GO" id="GO:0008270">
    <property type="term" value="F:zinc ion binding"/>
    <property type="evidence" value="ECO:0000250"/>
    <property type="project" value="UniProtKB"/>
</dbReference>
<dbReference type="GO" id="GO:0019509">
    <property type="term" value="P:L-methionine salvage from methylthioadenosine"/>
    <property type="evidence" value="ECO:0007669"/>
    <property type="project" value="UniProtKB-UniRule"/>
</dbReference>
<dbReference type="FunFam" id="3.40.225.10:FF:000003">
    <property type="entry name" value="Methylthioribulose-1-phosphate dehydratase"/>
    <property type="match status" value="1"/>
</dbReference>
<dbReference type="Gene3D" id="3.40.225.10">
    <property type="entry name" value="Class II aldolase/adducin N-terminal domain"/>
    <property type="match status" value="1"/>
</dbReference>
<dbReference type="HAMAP" id="MF_03116">
    <property type="entry name" value="Salvage_MtnB_euk"/>
    <property type="match status" value="1"/>
</dbReference>
<dbReference type="InterPro" id="IPR001303">
    <property type="entry name" value="Aldolase_II/adducin_N"/>
</dbReference>
<dbReference type="InterPro" id="IPR036409">
    <property type="entry name" value="Aldolase_II/adducin_N_sf"/>
</dbReference>
<dbReference type="InterPro" id="IPR017714">
    <property type="entry name" value="MethylthioRu-1-P_deHdtase_MtnB"/>
</dbReference>
<dbReference type="InterPro" id="IPR027514">
    <property type="entry name" value="Salvage_MtnB_euk"/>
</dbReference>
<dbReference type="NCBIfam" id="TIGR03328">
    <property type="entry name" value="salvage_mtnB"/>
    <property type="match status" value="1"/>
</dbReference>
<dbReference type="PANTHER" id="PTHR10640">
    <property type="entry name" value="METHYLTHIORIBULOSE-1-PHOSPHATE DEHYDRATASE"/>
    <property type="match status" value="1"/>
</dbReference>
<dbReference type="PANTHER" id="PTHR10640:SF7">
    <property type="entry name" value="METHYLTHIORIBULOSE-1-PHOSPHATE DEHYDRATASE"/>
    <property type="match status" value="1"/>
</dbReference>
<dbReference type="Pfam" id="PF00596">
    <property type="entry name" value="Aldolase_II"/>
    <property type="match status" value="1"/>
</dbReference>
<dbReference type="SMART" id="SM01007">
    <property type="entry name" value="Aldolase_II"/>
    <property type="match status" value="1"/>
</dbReference>
<dbReference type="SUPFAM" id="SSF53639">
    <property type="entry name" value="AraD/HMP-PK domain-like"/>
    <property type="match status" value="1"/>
</dbReference>
<proteinExistence type="inferred from homology"/>
<protein>
    <recommendedName>
        <fullName evidence="1">Probable methylthioribulose-1-phosphate dehydratase</fullName>
        <shortName evidence="1">MTRu-1-P dehydratase</shortName>
        <ecNumber evidence="1">4.2.1.109</ecNumber>
    </recommendedName>
</protein>